<feature type="chain" id="PRO_1000099311" description="Polyamine aminopropyltransferase">
    <location>
        <begin position="1"/>
        <end position="296"/>
    </location>
</feature>
<feature type="domain" description="PABS" evidence="1">
    <location>
        <begin position="5"/>
        <end position="238"/>
    </location>
</feature>
<feature type="active site" description="Proton acceptor" evidence="1">
    <location>
        <position position="158"/>
    </location>
</feature>
<feature type="binding site" evidence="1">
    <location>
        <position position="33"/>
    </location>
    <ligand>
        <name>S-methyl-5'-thioadenosine</name>
        <dbReference type="ChEBI" id="CHEBI:17509"/>
    </ligand>
</feature>
<feature type="binding site" evidence="1">
    <location>
        <position position="64"/>
    </location>
    <ligand>
        <name>spermidine</name>
        <dbReference type="ChEBI" id="CHEBI:57834"/>
    </ligand>
</feature>
<feature type="binding site" evidence="1">
    <location>
        <position position="88"/>
    </location>
    <ligand>
        <name>spermidine</name>
        <dbReference type="ChEBI" id="CHEBI:57834"/>
    </ligand>
</feature>
<feature type="binding site" evidence="1">
    <location>
        <position position="108"/>
    </location>
    <ligand>
        <name>S-methyl-5'-thioadenosine</name>
        <dbReference type="ChEBI" id="CHEBI:17509"/>
    </ligand>
</feature>
<feature type="binding site" evidence="1">
    <location>
        <begin position="140"/>
        <end position="141"/>
    </location>
    <ligand>
        <name>S-methyl-5'-thioadenosine</name>
        <dbReference type="ChEBI" id="CHEBI:17509"/>
    </ligand>
</feature>
<feature type="binding site" evidence="1">
    <location>
        <begin position="158"/>
        <end position="161"/>
    </location>
    <ligand>
        <name>spermidine</name>
        <dbReference type="ChEBI" id="CHEBI:57834"/>
    </ligand>
</feature>
<feature type="binding site" evidence="1">
    <location>
        <position position="165"/>
    </location>
    <ligand>
        <name>S-methyl-5'-thioadenosine</name>
        <dbReference type="ChEBI" id="CHEBI:17509"/>
    </ligand>
</feature>
<evidence type="ECO:0000255" key="1">
    <source>
        <dbReference type="HAMAP-Rule" id="MF_00198"/>
    </source>
</evidence>
<sequence length="296" mass="33166">MSQKELWYETLHANFGQYFSVENVLFREKTEHQDLVIFENPELGRVMALDGVVQTTERDEFIYHEMMTHVPLLAHGQAKKVLIIGGGDGAMLREVSRHKNIEQITMVEIDAGVVEFCRQYLPNHSAGAYDDPRFKLVIDDGVNFVNQTTEKFDVIISDCTDPIGPGESLFTSVFYEGCARSLNEGGIFVAQNGVCFLQQDEAVNSHNKLSHYFSDVSFYQAAIPTYYGGIMTFAWATQNPALRQLDLATLQNRFAQAGLACRYYNPAIHVGSFALPQYLLDALTTIPKVIGVDSSE</sequence>
<dbReference type="EC" id="2.5.1.16" evidence="1"/>
<dbReference type="EMBL" id="CP000901">
    <property type="protein sequence ID" value="ABX86982.1"/>
    <property type="molecule type" value="Genomic_DNA"/>
</dbReference>
<dbReference type="RefSeq" id="WP_002209338.1">
    <property type="nucleotide sequence ID" value="NZ_CP009935.1"/>
</dbReference>
<dbReference type="SMR" id="A9R1H4"/>
<dbReference type="GeneID" id="57975298"/>
<dbReference type="KEGG" id="ypg:YpAngola_A1023"/>
<dbReference type="PATRIC" id="fig|349746.12.peg.1971"/>
<dbReference type="UniPathway" id="UPA00248">
    <property type="reaction ID" value="UER00314"/>
</dbReference>
<dbReference type="GO" id="GO:0005829">
    <property type="term" value="C:cytosol"/>
    <property type="evidence" value="ECO:0007669"/>
    <property type="project" value="TreeGrafter"/>
</dbReference>
<dbReference type="GO" id="GO:0004766">
    <property type="term" value="F:spermidine synthase activity"/>
    <property type="evidence" value="ECO:0007669"/>
    <property type="project" value="UniProtKB-UniRule"/>
</dbReference>
<dbReference type="GO" id="GO:0008295">
    <property type="term" value="P:spermidine biosynthetic process"/>
    <property type="evidence" value="ECO:0007669"/>
    <property type="project" value="UniProtKB-UniRule"/>
</dbReference>
<dbReference type="CDD" id="cd02440">
    <property type="entry name" value="AdoMet_MTases"/>
    <property type="match status" value="1"/>
</dbReference>
<dbReference type="FunFam" id="2.30.140.10:FF:000002">
    <property type="entry name" value="Polyamine aminopropyltransferase"/>
    <property type="match status" value="1"/>
</dbReference>
<dbReference type="FunFam" id="3.40.50.150:FF:000026">
    <property type="entry name" value="Polyamine aminopropyltransferase"/>
    <property type="match status" value="1"/>
</dbReference>
<dbReference type="Gene3D" id="2.30.140.10">
    <property type="entry name" value="Spermidine synthase, tetramerisation domain"/>
    <property type="match status" value="1"/>
</dbReference>
<dbReference type="Gene3D" id="3.40.50.150">
    <property type="entry name" value="Vaccinia Virus protein VP39"/>
    <property type="match status" value="1"/>
</dbReference>
<dbReference type="HAMAP" id="MF_00198">
    <property type="entry name" value="Spermidine_synth"/>
    <property type="match status" value="1"/>
</dbReference>
<dbReference type="InterPro" id="IPR030374">
    <property type="entry name" value="PABS"/>
</dbReference>
<dbReference type="InterPro" id="IPR030373">
    <property type="entry name" value="PABS_CS"/>
</dbReference>
<dbReference type="InterPro" id="IPR029063">
    <property type="entry name" value="SAM-dependent_MTases_sf"/>
</dbReference>
<dbReference type="InterPro" id="IPR001045">
    <property type="entry name" value="Spermi_synthase"/>
</dbReference>
<dbReference type="InterPro" id="IPR035246">
    <property type="entry name" value="Spermidine_synt_N"/>
</dbReference>
<dbReference type="InterPro" id="IPR037163">
    <property type="entry name" value="Spermidine_synt_N_sf"/>
</dbReference>
<dbReference type="NCBIfam" id="NF037959">
    <property type="entry name" value="MFS_SpdSyn"/>
    <property type="match status" value="1"/>
</dbReference>
<dbReference type="NCBIfam" id="NF002010">
    <property type="entry name" value="PRK00811.1"/>
    <property type="match status" value="1"/>
</dbReference>
<dbReference type="NCBIfam" id="TIGR00417">
    <property type="entry name" value="speE"/>
    <property type="match status" value="1"/>
</dbReference>
<dbReference type="PANTHER" id="PTHR11558:SF11">
    <property type="entry name" value="SPERMIDINE SYNTHASE"/>
    <property type="match status" value="1"/>
</dbReference>
<dbReference type="PANTHER" id="PTHR11558">
    <property type="entry name" value="SPERMIDINE/SPERMINE SYNTHASE"/>
    <property type="match status" value="1"/>
</dbReference>
<dbReference type="Pfam" id="PF17284">
    <property type="entry name" value="Spermine_synt_N"/>
    <property type="match status" value="1"/>
</dbReference>
<dbReference type="Pfam" id="PF01564">
    <property type="entry name" value="Spermine_synth"/>
    <property type="match status" value="1"/>
</dbReference>
<dbReference type="SUPFAM" id="SSF53335">
    <property type="entry name" value="S-adenosyl-L-methionine-dependent methyltransferases"/>
    <property type="match status" value="1"/>
</dbReference>
<dbReference type="PROSITE" id="PS01330">
    <property type="entry name" value="PABS_1"/>
    <property type="match status" value="1"/>
</dbReference>
<dbReference type="PROSITE" id="PS51006">
    <property type="entry name" value="PABS_2"/>
    <property type="match status" value="1"/>
</dbReference>
<protein>
    <recommendedName>
        <fullName evidence="1">Polyamine aminopropyltransferase</fullName>
    </recommendedName>
    <alternativeName>
        <fullName evidence="1">Putrescine aminopropyltransferase</fullName>
        <shortName evidence="1">PAPT</shortName>
    </alternativeName>
    <alternativeName>
        <fullName evidence="1">Spermidine synthase</fullName>
        <shortName evidence="1">SPDS</shortName>
        <shortName evidence="1">SPDSY</shortName>
        <ecNumber evidence="1">2.5.1.16</ecNumber>
    </alternativeName>
</protein>
<name>SPEE_YERPG</name>
<accession>A9R1H4</accession>
<proteinExistence type="inferred from homology"/>
<keyword id="KW-0963">Cytoplasm</keyword>
<keyword id="KW-0620">Polyamine biosynthesis</keyword>
<keyword id="KW-0745">Spermidine biosynthesis</keyword>
<keyword id="KW-0808">Transferase</keyword>
<gene>
    <name evidence="1" type="primary">speE</name>
    <name type="ordered locus">YpAngola_A1023</name>
</gene>
<comment type="function">
    <text evidence="1">Catalyzes the irreversible transfer of a propylamine group from the amino donor S-adenosylmethioninamine (decarboxy-AdoMet) to putrescine (1,4-diaminobutane) to yield spermidine.</text>
</comment>
<comment type="catalytic activity">
    <reaction evidence="1">
        <text>S-adenosyl 3-(methylsulfanyl)propylamine + putrescine = S-methyl-5'-thioadenosine + spermidine + H(+)</text>
        <dbReference type="Rhea" id="RHEA:12721"/>
        <dbReference type="ChEBI" id="CHEBI:15378"/>
        <dbReference type="ChEBI" id="CHEBI:17509"/>
        <dbReference type="ChEBI" id="CHEBI:57443"/>
        <dbReference type="ChEBI" id="CHEBI:57834"/>
        <dbReference type="ChEBI" id="CHEBI:326268"/>
        <dbReference type="EC" id="2.5.1.16"/>
    </reaction>
</comment>
<comment type="pathway">
    <text evidence="1">Amine and polyamine biosynthesis; spermidine biosynthesis; spermidine from putrescine: step 1/1.</text>
</comment>
<comment type="subunit">
    <text evidence="1">Homodimer or homotetramer.</text>
</comment>
<comment type="subcellular location">
    <subcellularLocation>
        <location evidence="1">Cytoplasm</location>
    </subcellularLocation>
</comment>
<comment type="similarity">
    <text evidence="1">Belongs to the spermidine/spermine synthase family.</text>
</comment>
<reference key="1">
    <citation type="journal article" date="2010" name="J. Bacteriol.">
        <title>Genome sequence of the deep-rooted Yersinia pestis strain Angola reveals new insights into the evolution and pangenome of the plague bacterium.</title>
        <authorList>
            <person name="Eppinger M."/>
            <person name="Worsham P.L."/>
            <person name="Nikolich M.P."/>
            <person name="Riley D.R."/>
            <person name="Sebastian Y."/>
            <person name="Mou S."/>
            <person name="Achtman M."/>
            <person name="Lindler L.E."/>
            <person name="Ravel J."/>
        </authorList>
    </citation>
    <scope>NUCLEOTIDE SEQUENCE [LARGE SCALE GENOMIC DNA]</scope>
    <source>
        <strain>Angola</strain>
    </source>
</reference>
<organism>
    <name type="scientific">Yersinia pestis bv. Antiqua (strain Angola)</name>
    <dbReference type="NCBI Taxonomy" id="349746"/>
    <lineage>
        <taxon>Bacteria</taxon>
        <taxon>Pseudomonadati</taxon>
        <taxon>Pseudomonadota</taxon>
        <taxon>Gammaproteobacteria</taxon>
        <taxon>Enterobacterales</taxon>
        <taxon>Yersiniaceae</taxon>
        <taxon>Yersinia</taxon>
    </lineage>
</organism>